<accession>Q8CHI9</accession>
<accession>Q5U363</accession>
<reference key="1">
    <citation type="submission" date="2002-12" db="EMBL/GenBank/DDBJ databases">
        <title>N-acetylgalactosamine 4-sulfate 6-O-sulfotransferase cDNA.</title>
        <authorList>
            <person name="Ichihara-Tanaka K."/>
            <person name="Muramatsu T."/>
        </authorList>
    </citation>
    <scope>NUCLEOTIDE SEQUENCE [MRNA] (ISOFORM 1)</scope>
</reference>
<reference key="2">
    <citation type="journal article" date="2004" name="Genome Res.">
        <title>The status, quality, and expansion of the NIH full-length cDNA project: the Mammalian Gene Collection (MGC).</title>
        <authorList>
            <consortium name="The MGC Project Team"/>
        </authorList>
    </citation>
    <scope>NUCLEOTIDE SEQUENCE [LARGE SCALE MRNA] (ISOFORM 2)</scope>
    <source>
        <tissue>Heart</tissue>
    </source>
</reference>
<name>CHSTF_RAT</name>
<feature type="chain" id="PRO_0000225625" description="Carbohydrate sulfotransferase 15">
    <location>
        <begin position="1"/>
        <end position="561"/>
    </location>
</feature>
<feature type="topological domain" description="Cytoplasmic" evidence="2">
    <location>
        <begin position="1"/>
        <end position="80"/>
    </location>
</feature>
<feature type="transmembrane region" description="Helical; Signal-anchor for type II membrane protein" evidence="2">
    <location>
        <begin position="81"/>
        <end position="101"/>
    </location>
</feature>
<feature type="topological domain" description="Lumenal" evidence="2">
    <location>
        <begin position="102"/>
        <end position="561"/>
    </location>
</feature>
<feature type="binding site" evidence="1">
    <location>
        <begin position="263"/>
        <end position="267"/>
    </location>
    <ligand>
        <name>3'-phosphoadenylyl sulfate</name>
        <dbReference type="ChEBI" id="CHEBI:58339"/>
    </ligand>
</feature>
<feature type="binding site" evidence="1">
    <location>
        <position position="392"/>
    </location>
    <ligand>
        <name>3'-phosphoadenylyl sulfate</name>
        <dbReference type="ChEBI" id="CHEBI:58339"/>
    </ligand>
</feature>
<feature type="binding site" evidence="1">
    <location>
        <position position="400"/>
    </location>
    <ligand>
        <name>3'-phosphoadenylyl sulfate</name>
        <dbReference type="ChEBI" id="CHEBI:58339"/>
    </ligand>
</feature>
<feature type="glycosylation site" description="N-linked (GlcNAc...) asparagine" evidence="2">
    <location>
        <position position="364"/>
    </location>
</feature>
<feature type="splice variant" id="VSP_017388" description="In isoform 2." evidence="3">
    <original>RLYSDYL</original>
    <variation>SIQQSQV</variation>
    <location>
        <begin position="397"/>
        <end position="403"/>
    </location>
</feature>
<feature type="splice variant" id="VSP_017389" description="In isoform 2." evidence="3">
    <location>
        <begin position="404"/>
        <end position="561"/>
    </location>
</feature>
<feature type="sequence conflict" description="In Ref. 2; BAC53776." evidence="4" ref="2">
    <original>I</original>
    <variation>L</variation>
    <location>
        <position position="5"/>
    </location>
</feature>
<feature type="sequence conflict" description="In Ref. 2; BAC53776." evidence="4" ref="2">
    <original>D</original>
    <variation>N</variation>
    <location>
        <position position="41"/>
    </location>
</feature>
<feature type="sequence conflict" description="In Ref. 2; BAC53776." evidence="4" ref="2">
    <original>N</original>
    <variation>I</variation>
    <location>
        <position position="163"/>
    </location>
</feature>
<protein>
    <recommendedName>
        <fullName>Carbohydrate sulfotransferase 15</fullName>
        <ecNumber>2.8.2.33</ecNumber>
    </recommendedName>
    <alternativeName>
        <fullName>N-acetylgalactosamine 4-sulfate 6-O-sulfotransferase</fullName>
        <shortName>GalNAc4S-6ST</shortName>
    </alternativeName>
</protein>
<keyword id="KW-0025">Alternative splicing</keyword>
<keyword id="KW-1015">Disulfide bond</keyword>
<keyword id="KW-0325">Glycoprotein</keyword>
<keyword id="KW-0333">Golgi apparatus</keyword>
<keyword id="KW-0472">Membrane</keyword>
<keyword id="KW-1185">Reference proteome</keyword>
<keyword id="KW-0735">Signal-anchor</keyword>
<keyword id="KW-0808">Transferase</keyword>
<keyword id="KW-0812">Transmembrane</keyword>
<keyword id="KW-1133">Transmembrane helix</keyword>
<evidence type="ECO:0000250" key="1"/>
<evidence type="ECO:0000255" key="2"/>
<evidence type="ECO:0000303" key="3">
    <source>
    </source>
</evidence>
<evidence type="ECO:0000305" key="4"/>
<organism>
    <name type="scientific">Rattus norvegicus</name>
    <name type="common">Rat</name>
    <dbReference type="NCBI Taxonomy" id="10116"/>
    <lineage>
        <taxon>Eukaryota</taxon>
        <taxon>Metazoa</taxon>
        <taxon>Chordata</taxon>
        <taxon>Craniata</taxon>
        <taxon>Vertebrata</taxon>
        <taxon>Euteleostomi</taxon>
        <taxon>Mammalia</taxon>
        <taxon>Eutheria</taxon>
        <taxon>Euarchontoglires</taxon>
        <taxon>Glires</taxon>
        <taxon>Rodentia</taxon>
        <taxon>Myomorpha</taxon>
        <taxon>Muroidea</taxon>
        <taxon>Muridae</taxon>
        <taxon>Murinae</taxon>
        <taxon>Rattus</taxon>
    </lineage>
</organism>
<proteinExistence type="evidence at transcript level"/>
<dbReference type="EC" id="2.8.2.33"/>
<dbReference type="EMBL" id="BC085687">
    <property type="protein sequence ID" value="AAH85687.1"/>
    <property type="molecule type" value="mRNA"/>
</dbReference>
<dbReference type="EMBL" id="AB086953">
    <property type="protein sequence ID" value="BAC53776.1"/>
    <property type="molecule type" value="mRNA"/>
</dbReference>
<dbReference type="RefSeq" id="NP_775432.3">
    <molecule id="Q8CHI9-1"/>
    <property type="nucleotide sequence ID" value="NM_173310.3"/>
</dbReference>
<dbReference type="FunCoup" id="Q8CHI9">
    <property type="interactions" value="266"/>
</dbReference>
<dbReference type="STRING" id="10116.ENSRNOP00000022157"/>
<dbReference type="GlyCosmos" id="Q8CHI9">
    <property type="glycosylation" value="1 site, No reported glycans"/>
</dbReference>
<dbReference type="GlyGen" id="Q8CHI9">
    <property type="glycosylation" value="1 site"/>
</dbReference>
<dbReference type="PhosphoSitePlus" id="Q8CHI9"/>
<dbReference type="PaxDb" id="10116-ENSRNOP00000022157"/>
<dbReference type="GeneID" id="286974"/>
<dbReference type="KEGG" id="rno:286974"/>
<dbReference type="UCSC" id="RGD:628881">
    <molecule id="Q8CHI9-1"/>
    <property type="organism name" value="rat"/>
</dbReference>
<dbReference type="AGR" id="RGD:628881"/>
<dbReference type="CTD" id="51363"/>
<dbReference type="RGD" id="628881">
    <property type="gene designation" value="Chst15"/>
</dbReference>
<dbReference type="eggNOG" id="ENOG502QU6N">
    <property type="taxonomic scope" value="Eukaryota"/>
</dbReference>
<dbReference type="InParanoid" id="Q8CHI9"/>
<dbReference type="OrthoDB" id="8068875at2759"/>
<dbReference type="PhylomeDB" id="Q8CHI9"/>
<dbReference type="Reactome" id="R-RNO-2022870">
    <property type="pathway name" value="Chondroitin sulfate biosynthesis"/>
</dbReference>
<dbReference type="PRO" id="PR:Q8CHI9"/>
<dbReference type="Proteomes" id="UP000002494">
    <property type="component" value="Unplaced"/>
</dbReference>
<dbReference type="GO" id="GO:0000139">
    <property type="term" value="C:Golgi membrane"/>
    <property type="evidence" value="ECO:0007669"/>
    <property type="project" value="UniProtKB-SubCell"/>
</dbReference>
<dbReference type="GO" id="GO:0050656">
    <property type="term" value="F:3'-phosphoadenosine 5'-phosphosulfate binding"/>
    <property type="evidence" value="ECO:0000250"/>
    <property type="project" value="UniProtKB"/>
</dbReference>
<dbReference type="GO" id="GO:0050659">
    <property type="term" value="F:N-acetylgalactosamine 4-sulfate 6-O-sulfotransferase activity"/>
    <property type="evidence" value="ECO:0000250"/>
    <property type="project" value="UniProtKB"/>
</dbReference>
<dbReference type="GO" id="GO:0019319">
    <property type="term" value="P:hexose biosynthetic process"/>
    <property type="evidence" value="ECO:0000250"/>
    <property type="project" value="UniProtKB"/>
</dbReference>
<dbReference type="FunFam" id="3.40.50.300:FF:001079">
    <property type="entry name" value="carbohydrate sulfotransferase 15"/>
    <property type="match status" value="1"/>
</dbReference>
<dbReference type="Gene3D" id="3.40.50.300">
    <property type="entry name" value="P-loop containing nucleotide triphosphate hydrolases"/>
    <property type="match status" value="1"/>
</dbReference>
<dbReference type="InterPro" id="IPR052654">
    <property type="entry name" value="CS_Sulfotransferase"/>
</dbReference>
<dbReference type="InterPro" id="IPR027417">
    <property type="entry name" value="P-loop_NTPase"/>
</dbReference>
<dbReference type="InterPro" id="IPR000863">
    <property type="entry name" value="Sulfotransferase_dom"/>
</dbReference>
<dbReference type="PANTHER" id="PTHR15723">
    <property type="entry name" value="CARBOHYDRATE SULFOTRANSFERASE 15"/>
    <property type="match status" value="1"/>
</dbReference>
<dbReference type="PANTHER" id="PTHR15723:SF0">
    <property type="entry name" value="CARBOHYDRATE SULFOTRANSFERASE 15"/>
    <property type="match status" value="1"/>
</dbReference>
<dbReference type="Pfam" id="PF00685">
    <property type="entry name" value="Sulfotransfer_1"/>
    <property type="match status" value="1"/>
</dbReference>
<dbReference type="SUPFAM" id="SSF52540">
    <property type="entry name" value="P-loop containing nucleoside triphosphate hydrolases"/>
    <property type="match status" value="1"/>
</dbReference>
<comment type="function">
    <text evidence="1">Sulfotransferase that transfers sulfate from 3'-phosphoadenosine 5'-phosphosulfate (PAPS) to the C-6 hydroxyl group of the GalNAc 4-sulfate residue of chondroitin sulfate A and forms chondroitin sulfate E containing GlcA-GalNAc(4,6-SO(4)) repeating units. It also transfers sulfate to a unique non-reducing terminal sequence, GalNAc(4SO4)-GlcA(2SO4)-GalNAc(6SO4), to yield a highly sulfated structure similar to the structure found in thrombomodulin chondroitin sulfate. May also act as a B-cell receptor involved in BCR ligation-mediated early activation that mediate regulatory signals key to B-cell development and/or regulation of B-cell-specific RAG expression; however such results are unclear in vivo (By similarity).</text>
</comment>
<comment type="catalytic activity">
    <reaction>
        <text>dermatan 4'-sulfate + n 3'-phosphoadenylyl sulfate = dermatan 4',6'-bissulfate + n adenosine 3',5'-bisphosphate + n H(+)</text>
        <dbReference type="Rhea" id="RHEA:54304"/>
        <dbReference type="Rhea" id="RHEA-COMP:9965"/>
        <dbReference type="Rhea" id="RHEA-COMP:13850"/>
        <dbReference type="ChEBI" id="CHEBI:15378"/>
        <dbReference type="ChEBI" id="CHEBI:58339"/>
        <dbReference type="ChEBI" id="CHEBI:58343"/>
        <dbReference type="ChEBI" id="CHEBI:58465"/>
        <dbReference type="ChEBI" id="CHEBI:138121"/>
        <dbReference type="EC" id="2.8.2.33"/>
    </reaction>
</comment>
<comment type="catalytic activity">
    <reaction>
        <text>chondroitin 4'-sulfate + n 3'-phosphoadenylyl sulfate = chondroitin 4',6'-bissulfate + n adenosine 3',5'-bisphosphate + n H(+)</text>
        <dbReference type="Rhea" id="RHEA:54300"/>
        <dbReference type="Rhea" id="RHEA-COMP:9829"/>
        <dbReference type="Rhea" id="RHEA-COMP:13849"/>
        <dbReference type="ChEBI" id="CHEBI:15378"/>
        <dbReference type="ChEBI" id="CHEBI:58339"/>
        <dbReference type="ChEBI" id="CHEBI:58343"/>
        <dbReference type="ChEBI" id="CHEBI:58422"/>
        <dbReference type="ChEBI" id="CHEBI:138112"/>
        <dbReference type="EC" id="2.8.2.33"/>
    </reaction>
</comment>
<comment type="cofactor">
    <cofactor evidence="1">
        <name>a divalent metal cation</name>
        <dbReference type="ChEBI" id="CHEBI:60240"/>
    </cofactor>
</comment>
<comment type="cofactor">
    <cofactor evidence="1">
        <name>glutathione</name>
        <dbReference type="ChEBI" id="CHEBI:57925"/>
    </cofactor>
</comment>
<comment type="activity regulation">
    <text>Inhibited by phenyl beta-GalNAc(4,6-SO(4)).</text>
</comment>
<comment type="subunit">
    <text evidence="1 4">Homodimer; disulfide-linked (Potential). The relevance of homodimerization is however unsure. May interact with phosphorylated proteins in resting B-cells, including HCK (By similarity).</text>
</comment>
<comment type="subcellular location">
    <subcellularLocation>
        <location evidence="4">Golgi apparatus membrane</location>
        <topology evidence="4">Single-pass type II membrane protein</topology>
    </subcellularLocation>
    <text>A small fraction may also be present at the cell surface, where it acts as a B-cell receptor.</text>
</comment>
<comment type="alternative products">
    <event type="alternative splicing"/>
    <isoform>
        <id>Q8CHI9-1</id>
        <name>1</name>
        <sequence type="displayed"/>
    </isoform>
    <isoform>
        <id>Q8CHI9-2</id>
        <name>2</name>
        <sequence type="described" ref="VSP_017388 VSP_017389"/>
    </isoform>
</comment>
<comment type="PTM">
    <text evidence="1">Glycosylated.</text>
</comment>
<comment type="similarity">
    <text evidence="4">Belongs to the sulfotransferase 1 family.</text>
</comment>
<sequence length="561" mass="65044">MRHCINCCIQLFPEDAHKQQVACQGGPHHSHQACPSCKGEDKILFRVDSKQMNLLAVLEVRTEGNENWGGFLRFRKGKRCSLVFGLIIMTLVMASYILSGAHQELLISSPFHYGGFPSNPSVMDSESPSDVKEHHYQPSVNNISYVKDYPNIKLIIDSIAARNEFTTRQLPDLQDLKRQELHMFSVIPNKFLPTSKSPCWYEEFSGRNTTDPYLTNSYVLYSKRFRSTFDTLRKAFWGHLSHVHGKHFRLRCLPHFYIIGQPKCGTTDLYDRLRLHPEVKFSAIKEPHWWTRKRFGIVRLRDGLRDRYPVEDYLDLFDLAAHQIHQGLQAASAEQTSKMNRIIIGEASASTMWDNNAWTFFYDNSTDGEPPFLTQDFIHAFQPEAKLLVMLRDPVERLYSDYLYFASSNKSADDFHEKVTEALQLFENCMLDYSLRACVYNNTLNNAMPVRLQVGLYAVYLLDWLTVFSKEQFLILRLEDHASNVKYTMHKVFQFLNLGPLSEKQEALMTKSPASNTRRPEDRSLGPMWPITQKILRDFYGPFNTRLAQVLDDEAFAWKTT</sequence>
<gene>
    <name type="primary">Chst15</name>
    <name type="synonym">Galnac4s6st</name>
</gene>